<feature type="chain" id="PRO_0000196852" description="Uncharacterized mitochondrial protein ymf25">
    <location>
        <begin position="1"/>
        <end position="64"/>
    </location>
</feature>
<name>YMF25_MARPO</name>
<comment type="subcellular location">
    <subcellularLocation>
        <location evidence="1">Mitochondrion</location>
    </subcellularLocation>
</comment>
<accession>P38467</accession>
<evidence type="ECO:0000305" key="1"/>
<keyword id="KW-0496">Mitochondrion</keyword>
<sequence length="64" mass="7473">MKLLVYPLFTNVINNCGLRLKKSTNRKPKIHICFLFAEAVPITSNFDFQECLFFDSYLDLVRSV</sequence>
<dbReference type="EMBL" id="M68929">
    <property type="protein sequence ID" value="AAC09396.1"/>
    <property type="molecule type" value="Genomic_DNA"/>
</dbReference>
<dbReference type="PIR" id="S25961">
    <property type="entry name" value="S25961"/>
</dbReference>
<dbReference type="GO" id="GO:0005739">
    <property type="term" value="C:mitochondrion"/>
    <property type="evidence" value="ECO:0007669"/>
    <property type="project" value="UniProtKB-SubCell"/>
</dbReference>
<protein>
    <recommendedName>
        <fullName>Uncharacterized mitochondrial protein ymf25</fullName>
    </recommendedName>
    <alternativeName>
        <fullName>ORF64</fullName>
    </alternativeName>
</protein>
<proteinExistence type="predicted"/>
<gene>
    <name type="primary">YMF25</name>
</gene>
<reference key="1">
    <citation type="journal article" date="1992" name="J. Mol. Biol.">
        <title>Gene organization deduced from the complete sequence of liverwort Marchantia polymorpha mitochondrial DNA. A primitive form of plant mitochondrial genome.</title>
        <authorList>
            <person name="Oda K."/>
            <person name="Yamato K."/>
            <person name="Ohta E."/>
            <person name="Nakamura Y."/>
            <person name="Takemura M."/>
            <person name="Nozato N."/>
            <person name="Akashi K."/>
            <person name="Kanegae T."/>
            <person name="Ogura Y."/>
            <person name="Kohchi T."/>
            <person name="Ohyama K."/>
        </authorList>
    </citation>
    <scope>NUCLEOTIDE SEQUENCE [GENOMIC DNA]</scope>
</reference>
<geneLocation type="mitochondrion"/>
<organism>
    <name type="scientific">Marchantia polymorpha</name>
    <name type="common">Common liverwort</name>
    <name type="synonym">Marchantia aquatica</name>
    <dbReference type="NCBI Taxonomy" id="3197"/>
    <lineage>
        <taxon>Eukaryota</taxon>
        <taxon>Viridiplantae</taxon>
        <taxon>Streptophyta</taxon>
        <taxon>Embryophyta</taxon>
        <taxon>Marchantiophyta</taxon>
        <taxon>Marchantiopsida</taxon>
        <taxon>Marchantiidae</taxon>
        <taxon>Marchantiales</taxon>
        <taxon>Marchantiaceae</taxon>
        <taxon>Marchantia</taxon>
    </lineage>
</organism>